<evidence type="ECO:0000255" key="1">
    <source>
        <dbReference type="HAMAP-Rule" id="MF_01716"/>
    </source>
</evidence>
<keyword id="KW-0067">ATP-binding</keyword>
<keyword id="KW-0997">Cell inner membrane</keyword>
<keyword id="KW-1003">Cell membrane</keyword>
<keyword id="KW-0472">Membrane</keyword>
<keyword id="KW-0547">Nucleotide-binding</keyword>
<keyword id="KW-0677">Repeat</keyword>
<keyword id="KW-0762">Sugar transport</keyword>
<keyword id="KW-1278">Translocase</keyword>
<keyword id="KW-0813">Transport</keyword>
<name>RBSA2_BURCH</name>
<organism>
    <name type="scientific">Burkholderia cenocepacia (strain HI2424)</name>
    <dbReference type="NCBI Taxonomy" id="331272"/>
    <lineage>
        <taxon>Bacteria</taxon>
        <taxon>Pseudomonadati</taxon>
        <taxon>Pseudomonadota</taxon>
        <taxon>Betaproteobacteria</taxon>
        <taxon>Burkholderiales</taxon>
        <taxon>Burkholderiaceae</taxon>
        <taxon>Burkholderia</taxon>
        <taxon>Burkholderia cepacia complex</taxon>
    </lineage>
</organism>
<sequence>MDTILRLSHITKSFPGVKALSDIDLEIARGEIHALLGENGAGKSTLMKILCGIHQPDAGTIEIDGAARHFADYHDAVAAGVGIVFQEFSLIPHLDAVDNLFLGRELRNRWGARDRKRMRAAAAAIFARLGVAIDLDAPIRTLSVAQQQFVEIGKALSLDARILILDEPTATLTPAEAEHLFAIMRELKRQGVAMIFISHHLDEIFVVCDRITVLRDGQYVATTEVARTDVEQLVRMMVGRRIESSFPPKPVLPADAPAVLEVDALQIERDGPVNRFALREGEILGFAGLVGSGRTETALAVIGATRAHRKELRVRGAAAKLADPADALRAGIGILPESRKTEGLVTSFSIRDNISLNNLGKYRSMRWLIDRRGEARTTHDVMRRVGVKAPSIHTEVATLSGGNQQKVVIARWLNHHTSVLIFDEPTRGIDVGAKAEIYGLMRELTARGYAIIMISSELPEIVGMCDRVAVFRQGRIEATLEGDEIDPDTVMTYATAGTRGATHEPA</sequence>
<feature type="chain" id="PRO_0000277512" description="Ribose import ATP-binding protein RbsA 2">
    <location>
        <begin position="1"/>
        <end position="506"/>
    </location>
</feature>
<feature type="domain" description="ABC transporter 1" evidence="1">
    <location>
        <begin position="5"/>
        <end position="241"/>
    </location>
</feature>
<feature type="domain" description="ABC transporter 2" evidence="1">
    <location>
        <begin position="254"/>
        <end position="498"/>
    </location>
</feature>
<feature type="binding site" evidence="1">
    <location>
        <begin position="37"/>
        <end position="44"/>
    </location>
    <ligand>
        <name>ATP</name>
        <dbReference type="ChEBI" id="CHEBI:30616"/>
    </ligand>
</feature>
<proteinExistence type="inferred from homology"/>
<dbReference type="EC" id="7.5.2.7" evidence="1"/>
<dbReference type="EMBL" id="CP000459">
    <property type="protein sequence ID" value="ABK11553.1"/>
    <property type="molecule type" value="Genomic_DNA"/>
</dbReference>
<dbReference type="RefSeq" id="WP_011547326.1">
    <property type="nucleotide sequence ID" value="NC_008543.1"/>
</dbReference>
<dbReference type="SMR" id="A0B1M7"/>
<dbReference type="KEGG" id="bch:Bcen2424_4819"/>
<dbReference type="HOGENOM" id="CLU_000604_92_3_4"/>
<dbReference type="GO" id="GO:0005886">
    <property type="term" value="C:plasma membrane"/>
    <property type="evidence" value="ECO:0007669"/>
    <property type="project" value="UniProtKB-SubCell"/>
</dbReference>
<dbReference type="GO" id="GO:0015611">
    <property type="term" value="F:ABC-type D-ribose transporter activity"/>
    <property type="evidence" value="ECO:0007669"/>
    <property type="project" value="UniProtKB-EC"/>
</dbReference>
<dbReference type="GO" id="GO:0005524">
    <property type="term" value="F:ATP binding"/>
    <property type="evidence" value="ECO:0007669"/>
    <property type="project" value="UniProtKB-KW"/>
</dbReference>
<dbReference type="GO" id="GO:0016887">
    <property type="term" value="F:ATP hydrolysis activity"/>
    <property type="evidence" value="ECO:0007669"/>
    <property type="project" value="InterPro"/>
</dbReference>
<dbReference type="CDD" id="cd03216">
    <property type="entry name" value="ABC_Carb_Monos_I"/>
    <property type="match status" value="1"/>
</dbReference>
<dbReference type="CDD" id="cd03215">
    <property type="entry name" value="ABC_Carb_Monos_II"/>
    <property type="match status" value="1"/>
</dbReference>
<dbReference type="FunFam" id="3.40.50.300:FF:000127">
    <property type="entry name" value="Ribose import ATP-binding protein RbsA"/>
    <property type="match status" value="1"/>
</dbReference>
<dbReference type="Gene3D" id="3.40.50.300">
    <property type="entry name" value="P-loop containing nucleotide triphosphate hydrolases"/>
    <property type="match status" value="2"/>
</dbReference>
<dbReference type="InterPro" id="IPR003593">
    <property type="entry name" value="AAA+_ATPase"/>
</dbReference>
<dbReference type="InterPro" id="IPR050107">
    <property type="entry name" value="ABC_carbohydrate_import_ATPase"/>
</dbReference>
<dbReference type="InterPro" id="IPR003439">
    <property type="entry name" value="ABC_transporter-like_ATP-bd"/>
</dbReference>
<dbReference type="InterPro" id="IPR017871">
    <property type="entry name" value="ABC_transporter-like_CS"/>
</dbReference>
<dbReference type="InterPro" id="IPR027417">
    <property type="entry name" value="P-loop_NTPase"/>
</dbReference>
<dbReference type="PANTHER" id="PTHR43790">
    <property type="entry name" value="CARBOHYDRATE TRANSPORT ATP-BINDING PROTEIN MG119-RELATED"/>
    <property type="match status" value="1"/>
</dbReference>
<dbReference type="PANTHER" id="PTHR43790:SF3">
    <property type="entry name" value="D-ALLOSE IMPORT ATP-BINDING PROTEIN ALSA-RELATED"/>
    <property type="match status" value="1"/>
</dbReference>
<dbReference type="Pfam" id="PF00005">
    <property type="entry name" value="ABC_tran"/>
    <property type="match status" value="2"/>
</dbReference>
<dbReference type="SMART" id="SM00382">
    <property type="entry name" value="AAA"/>
    <property type="match status" value="2"/>
</dbReference>
<dbReference type="SUPFAM" id="SSF52540">
    <property type="entry name" value="P-loop containing nucleoside triphosphate hydrolases"/>
    <property type="match status" value="2"/>
</dbReference>
<dbReference type="PROSITE" id="PS00211">
    <property type="entry name" value="ABC_TRANSPORTER_1"/>
    <property type="match status" value="1"/>
</dbReference>
<dbReference type="PROSITE" id="PS50893">
    <property type="entry name" value="ABC_TRANSPORTER_2"/>
    <property type="match status" value="2"/>
</dbReference>
<dbReference type="PROSITE" id="PS51254">
    <property type="entry name" value="RBSA"/>
    <property type="match status" value="1"/>
</dbReference>
<comment type="function">
    <text evidence="1">Part of the ABC transporter complex RbsABC involved in ribose import. Responsible for energy coupling to the transport system.</text>
</comment>
<comment type="catalytic activity">
    <reaction evidence="1">
        <text>D-ribose(out) + ATP + H2O = D-ribose(in) + ADP + phosphate + H(+)</text>
        <dbReference type="Rhea" id="RHEA:29903"/>
        <dbReference type="ChEBI" id="CHEBI:15377"/>
        <dbReference type="ChEBI" id="CHEBI:15378"/>
        <dbReference type="ChEBI" id="CHEBI:30616"/>
        <dbReference type="ChEBI" id="CHEBI:43474"/>
        <dbReference type="ChEBI" id="CHEBI:47013"/>
        <dbReference type="ChEBI" id="CHEBI:456216"/>
        <dbReference type="EC" id="7.5.2.7"/>
    </reaction>
</comment>
<comment type="subunit">
    <text evidence="1">The complex is composed of an ATP-binding protein (RbsA), two transmembrane proteins (RbsC) and a solute-binding protein (RbsB).</text>
</comment>
<comment type="subcellular location">
    <subcellularLocation>
        <location evidence="1">Cell inner membrane</location>
        <topology evidence="1">Peripheral membrane protein</topology>
    </subcellularLocation>
</comment>
<comment type="similarity">
    <text evidence="1">Belongs to the ABC transporter superfamily. Ribose importer (TC 3.A.1.2.1) family.</text>
</comment>
<accession>A0B1M7</accession>
<protein>
    <recommendedName>
        <fullName evidence="1">Ribose import ATP-binding protein RbsA 2</fullName>
        <ecNumber evidence="1">7.5.2.7</ecNumber>
    </recommendedName>
</protein>
<gene>
    <name evidence="1" type="primary">rbsA2</name>
    <name type="ordered locus">Bcen2424_4819</name>
</gene>
<reference key="1">
    <citation type="submission" date="2006-08" db="EMBL/GenBank/DDBJ databases">
        <title>Complete sequence of chromosome 2 of Burkholderia cenocepacia HI2424.</title>
        <authorList>
            <person name="Copeland A."/>
            <person name="Lucas S."/>
            <person name="Lapidus A."/>
            <person name="Barry K."/>
            <person name="Detter J.C."/>
            <person name="Glavina del Rio T."/>
            <person name="Hammon N."/>
            <person name="Israni S."/>
            <person name="Pitluck S."/>
            <person name="Chain P."/>
            <person name="Malfatti S."/>
            <person name="Shin M."/>
            <person name="Vergez L."/>
            <person name="Schmutz J."/>
            <person name="Larimer F."/>
            <person name="Land M."/>
            <person name="Hauser L."/>
            <person name="Kyrpides N."/>
            <person name="Kim E."/>
            <person name="LiPuma J.J."/>
            <person name="Gonzalez C.F."/>
            <person name="Konstantinidis K."/>
            <person name="Tiedje J.M."/>
            <person name="Richardson P."/>
        </authorList>
    </citation>
    <scope>NUCLEOTIDE SEQUENCE [LARGE SCALE GENOMIC DNA]</scope>
    <source>
        <strain>HI2424</strain>
    </source>
</reference>